<gene>
    <name type="primary">ifkC</name>
    <name type="ORF">DDB_G0276043</name>
</gene>
<accession>Q75JN1</accession>
<accession>Q551Y4</accession>
<evidence type="ECO:0000255" key="1">
    <source>
        <dbReference type="PROSITE-ProRule" id="PRU00159"/>
    </source>
</evidence>
<evidence type="ECO:0000255" key="2">
    <source>
        <dbReference type="PROSITE-ProRule" id="PRU00179"/>
    </source>
</evidence>
<evidence type="ECO:0000255" key="3">
    <source>
        <dbReference type="PROSITE-ProRule" id="PRU10027"/>
    </source>
</evidence>
<evidence type="ECO:0000256" key="4">
    <source>
        <dbReference type="SAM" id="MobiDB-lite"/>
    </source>
</evidence>
<reference key="1">
    <citation type="journal article" date="2002" name="Nature">
        <title>Sequence and analysis of chromosome 2 of Dictyostelium discoideum.</title>
        <authorList>
            <person name="Gloeckner G."/>
            <person name="Eichinger L."/>
            <person name="Szafranski K."/>
            <person name="Pachebat J.A."/>
            <person name="Bankier A.T."/>
            <person name="Dear P.H."/>
            <person name="Lehmann R."/>
            <person name="Baumgart C."/>
            <person name="Parra G."/>
            <person name="Abril J.F."/>
            <person name="Guigo R."/>
            <person name="Kumpf K."/>
            <person name="Tunggal B."/>
            <person name="Cox E.C."/>
            <person name="Quail M.A."/>
            <person name="Platzer M."/>
            <person name="Rosenthal A."/>
            <person name="Noegel A.A."/>
        </authorList>
    </citation>
    <scope>NUCLEOTIDE SEQUENCE [LARGE SCALE GENOMIC DNA]</scope>
    <source>
        <strain>AX4</strain>
    </source>
</reference>
<reference key="2">
    <citation type="journal article" date="2005" name="Nature">
        <title>The genome of the social amoeba Dictyostelium discoideum.</title>
        <authorList>
            <person name="Eichinger L."/>
            <person name="Pachebat J.A."/>
            <person name="Gloeckner G."/>
            <person name="Rajandream M.A."/>
            <person name="Sucgang R."/>
            <person name="Berriman M."/>
            <person name="Song J."/>
            <person name="Olsen R."/>
            <person name="Szafranski K."/>
            <person name="Xu Q."/>
            <person name="Tunggal B."/>
            <person name="Kummerfeld S."/>
            <person name="Madera M."/>
            <person name="Konfortov B.A."/>
            <person name="Rivero F."/>
            <person name="Bankier A.T."/>
            <person name="Lehmann R."/>
            <person name="Hamlin N."/>
            <person name="Davies R."/>
            <person name="Gaudet P."/>
            <person name="Fey P."/>
            <person name="Pilcher K."/>
            <person name="Chen G."/>
            <person name="Saunders D."/>
            <person name="Sodergren E.J."/>
            <person name="Davis P."/>
            <person name="Kerhornou A."/>
            <person name="Nie X."/>
            <person name="Hall N."/>
            <person name="Anjard C."/>
            <person name="Hemphill L."/>
            <person name="Bason N."/>
            <person name="Farbrother P."/>
            <person name="Desany B."/>
            <person name="Just E."/>
            <person name="Morio T."/>
            <person name="Rost R."/>
            <person name="Churcher C.M."/>
            <person name="Cooper J."/>
            <person name="Haydock S."/>
            <person name="van Driessche N."/>
            <person name="Cronin A."/>
            <person name="Goodhead I."/>
            <person name="Muzny D.M."/>
            <person name="Mourier T."/>
            <person name="Pain A."/>
            <person name="Lu M."/>
            <person name="Harper D."/>
            <person name="Lindsay R."/>
            <person name="Hauser H."/>
            <person name="James K.D."/>
            <person name="Quiles M."/>
            <person name="Madan Babu M."/>
            <person name="Saito T."/>
            <person name="Buchrieser C."/>
            <person name="Wardroper A."/>
            <person name="Felder M."/>
            <person name="Thangavelu M."/>
            <person name="Johnson D."/>
            <person name="Knights A."/>
            <person name="Loulseged H."/>
            <person name="Mungall K.L."/>
            <person name="Oliver K."/>
            <person name="Price C."/>
            <person name="Quail M.A."/>
            <person name="Urushihara H."/>
            <person name="Hernandez J."/>
            <person name="Rabbinowitsch E."/>
            <person name="Steffen D."/>
            <person name="Sanders M."/>
            <person name="Ma J."/>
            <person name="Kohara Y."/>
            <person name="Sharp S."/>
            <person name="Simmonds M.N."/>
            <person name="Spiegler S."/>
            <person name="Tivey A."/>
            <person name="Sugano S."/>
            <person name="White B."/>
            <person name="Walker D."/>
            <person name="Woodward J.R."/>
            <person name="Winckler T."/>
            <person name="Tanaka Y."/>
            <person name="Shaulsky G."/>
            <person name="Schleicher M."/>
            <person name="Weinstock G.M."/>
            <person name="Rosenthal A."/>
            <person name="Cox E.C."/>
            <person name="Chisholm R.L."/>
            <person name="Gibbs R.A."/>
            <person name="Loomis W.F."/>
            <person name="Platzer M."/>
            <person name="Kay R.R."/>
            <person name="Williams J.G."/>
            <person name="Dear P.H."/>
            <person name="Noegel A.A."/>
            <person name="Barrell B.G."/>
            <person name="Kuspa A."/>
        </authorList>
    </citation>
    <scope>NUCLEOTIDE SEQUENCE [LARGE SCALE GENOMIC DNA]</scope>
    <source>
        <strain>AX4</strain>
    </source>
</reference>
<comment type="catalytic activity">
    <reaction>
        <text>L-seryl-[protein] + ATP = O-phospho-L-seryl-[protein] + ADP + H(+)</text>
        <dbReference type="Rhea" id="RHEA:17989"/>
        <dbReference type="Rhea" id="RHEA-COMP:9863"/>
        <dbReference type="Rhea" id="RHEA-COMP:11604"/>
        <dbReference type="ChEBI" id="CHEBI:15378"/>
        <dbReference type="ChEBI" id="CHEBI:29999"/>
        <dbReference type="ChEBI" id="CHEBI:30616"/>
        <dbReference type="ChEBI" id="CHEBI:83421"/>
        <dbReference type="ChEBI" id="CHEBI:456216"/>
        <dbReference type="EC" id="2.7.11.1"/>
    </reaction>
</comment>
<comment type="catalytic activity">
    <reaction>
        <text>L-threonyl-[protein] + ATP = O-phospho-L-threonyl-[protein] + ADP + H(+)</text>
        <dbReference type="Rhea" id="RHEA:46608"/>
        <dbReference type="Rhea" id="RHEA-COMP:11060"/>
        <dbReference type="Rhea" id="RHEA-COMP:11605"/>
        <dbReference type="ChEBI" id="CHEBI:15378"/>
        <dbReference type="ChEBI" id="CHEBI:30013"/>
        <dbReference type="ChEBI" id="CHEBI:30616"/>
        <dbReference type="ChEBI" id="CHEBI:61977"/>
        <dbReference type="ChEBI" id="CHEBI:456216"/>
        <dbReference type="EC" id="2.7.11.1"/>
    </reaction>
</comment>
<comment type="similarity">
    <text evidence="1">Belongs to the protein kinase superfamily. Ser/Thr protein kinase family. GCN2 subfamily.</text>
</comment>
<sequence length="1700" mass="194665">MPPKPKQKAKQPSQQPPPPPPPAAAQLIEDILSSDEEEGGVKLPTKSSVKNALKKVKKERDRELIRQLKDQQDMELEALQAIFNDEFITMDPIIINRNMDTIIEGIKPIRESARFRITIKPYVGDDEKCFVSIYLVVGFPEKYPVVLPSIQVLVNKGLPQKKAIELEEKLIRESQGKIGNIMIFDLCEIAKDFLNENNFEPTQSIHHDFRSHQQKISIEISTNEQQQQQLQQLQQLQLQYNNDTKKEWESTLEESQLKEDRKNYRLQKSIQRAQYEKERKKTIVNEFTNGPQSKLSKQQRNIDYSIDHSINNNNNNNNNAFNNFNNNNNNNNTNNSNVSSIDNKTIDKQQTMILHLLRLLCQNDSNITNDHIKTLGEQLVQMGIFNRNHLSLLNMHNSNDNQIYQHIFQDYFLKQFNDISLSDLKNNVDSAANNSGHFLNKFWDTLNKTNENSGLKKSPSTFEYSGEGGGGGVGGGSSQKTINPHQQSRYHSDFEEIQLLGRGGFGQVVKVRNKLDGRYYAIKKIKLDSNQSLNRRILREVITLSRLHHQHVVRYYQAWIESAESLSLTNDNSDDDDDDDDEFESGSESEESQSESESESSESEESSESEESSESSESEESEESEYSDDSEFESEENNDFDQSFSEVFLFQNGNKRSLEFDLTDDSYSFLHSDCGFLLEVFDLNNKIGGNNTRSMGSSNQHLQQQQQQNQSQQQKKQPQQNQSQQQKKLKNSNSKSKSKSKSKSKSKSKSNSKKSISSSKLKNIKKSTSIPYLYIQMEYCQKILRNLTETGMNLEDDDIWKLFRQIVEGMAYVHGQGIIHRDLKPSNIFFDSCGDIKIGDFGLAINNKTTSTLSPTTNINSSTSSAGSLTTSSNSVQSVINTKQQQQQQQPQNYWEDEVEGQQQQQQQQQQQQQQQQQQQQQQQQHTARVGTLFYTSPEQEAGTNGDSAYDDKVDMYSLGIVFFEMWYVFSTGHERVIVLRNLREKFEFPSDFERNHSRQATLIRMLIDKDPAKRPSAQQLLQSELMPPKMEDEYIKNSIRVITNPTNQFYQTMLNSLFSQNHQHLHSHIYHHQQSSVTSSSYSKSLFCSLDLLQVKQLVDDVIITILKKHNANEMLTPQMSIIKEWNEQPNLFNNSSSSSSTTTTTSTTNTANNTNSVVINKSTSTSNINKVSNKTGKSILMDDSGQLLELRHDLRVSFKSFIETEFLNLGDHYKHHHQQQNDVRHDNSSNGNSNNNNSNDRHHDQDKSNTTTRSVDEILELLSKAPIKRYEFGHVFRKPHLVGKLPKELSQFCFDVFGSSSLYSDAETIKVTTEIFDSLPSTQNFYFVRLNHFGIVEYMWKFIGITDLTLKNEISQVVSQLIRQPWFTVKKVLLEKFKLPLKQVERIANWVLVKGTIPDVLKKLDASQNNNPLLSGNGSLGNNNNNNNNNNNVRISSSFTDLLEDIRQLAVYFEKMSISPHKVIFDLSYCFSENFYSTGIMFQVILKEEKHECLAVGGRYDSPLNLNNSNNSSSSSSSSSSNNNNSYNNYNNNNNYNYNYYSNCYLTNFNLPITGLSVAMDKVYSRERELYSQKRRQQLPPTLSSESQMIAHKFSTPDIFVISLGPNLFLERIGIVGDLCNAGFNAETMYIENPTPEEQQDASITSGALYIITIKEKGAKKTIKVKNIEKRREDDVSRDEIVKFFTLSNFNSKSRLNI</sequence>
<proteinExistence type="inferred from homology"/>
<protein>
    <recommendedName>
        <fullName>Probable serine/threonine-protein kinase ifkC</fullName>
        <ecNumber>2.7.11.1</ecNumber>
    </recommendedName>
    <alternativeName>
        <fullName>Initiation factor kinase C</fullName>
    </alternativeName>
</protein>
<name>IFKC_DICDI</name>
<organism>
    <name type="scientific">Dictyostelium discoideum</name>
    <name type="common">Social amoeba</name>
    <dbReference type="NCBI Taxonomy" id="44689"/>
    <lineage>
        <taxon>Eukaryota</taxon>
        <taxon>Amoebozoa</taxon>
        <taxon>Evosea</taxon>
        <taxon>Eumycetozoa</taxon>
        <taxon>Dictyostelia</taxon>
        <taxon>Dictyosteliales</taxon>
        <taxon>Dictyosteliaceae</taxon>
        <taxon>Dictyostelium</taxon>
    </lineage>
</organism>
<keyword id="KW-0067">ATP-binding</keyword>
<keyword id="KW-0418">Kinase</keyword>
<keyword id="KW-0547">Nucleotide-binding</keyword>
<keyword id="KW-1185">Reference proteome</keyword>
<keyword id="KW-0723">Serine/threonine-protein kinase</keyword>
<keyword id="KW-0808">Transferase</keyword>
<dbReference type="EC" id="2.7.11.1"/>
<dbReference type="EMBL" id="AAFI02000014">
    <property type="protein sequence ID" value="EAL69321.1"/>
    <property type="molecule type" value="Genomic_DNA"/>
</dbReference>
<dbReference type="RefSeq" id="XP_643344.1">
    <property type="nucleotide sequence ID" value="XM_638252.1"/>
</dbReference>
<dbReference type="STRING" id="44689.Q75JN1"/>
<dbReference type="PaxDb" id="44689-DDB0216407"/>
<dbReference type="EnsemblProtists" id="EAL69321">
    <property type="protein sequence ID" value="EAL69321"/>
    <property type="gene ID" value="DDB_G0276043"/>
</dbReference>
<dbReference type="GeneID" id="8620394"/>
<dbReference type="KEGG" id="ddi:DDB_G0276043"/>
<dbReference type="dictyBase" id="DDB_G0276043">
    <property type="gene designation" value="ifkC"/>
</dbReference>
<dbReference type="VEuPathDB" id="AmoebaDB:DDB_G0276043"/>
<dbReference type="eggNOG" id="KOG1033">
    <property type="taxonomic scope" value="Eukaryota"/>
</dbReference>
<dbReference type="eggNOG" id="KOG1035">
    <property type="taxonomic scope" value="Eukaryota"/>
</dbReference>
<dbReference type="HOGENOM" id="CLU_240920_0_0_1"/>
<dbReference type="InParanoid" id="Q75JN1"/>
<dbReference type="OMA" id="MEYCQKI"/>
<dbReference type="PhylomeDB" id="Q75JN1"/>
<dbReference type="PRO" id="PR:Q75JN1"/>
<dbReference type="Proteomes" id="UP000002195">
    <property type="component" value="Chromosome 2"/>
</dbReference>
<dbReference type="GO" id="GO:0005737">
    <property type="term" value="C:cytoplasm"/>
    <property type="evidence" value="ECO:0000318"/>
    <property type="project" value="GO_Central"/>
</dbReference>
<dbReference type="GO" id="GO:0005829">
    <property type="term" value="C:cytosol"/>
    <property type="evidence" value="ECO:0000318"/>
    <property type="project" value="GO_Central"/>
</dbReference>
<dbReference type="GO" id="GO:0005634">
    <property type="term" value="C:nucleus"/>
    <property type="evidence" value="ECO:0000318"/>
    <property type="project" value="GO_Central"/>
</dbReference>
<dbReference type="GO" id="GO:0005524">
    <property type="term" value="F:ATP binding"/>
    <property type="evidence" value="ECO:0007669"/>
    <property type="project" value="UniProtKB-KW"/>
</dbReference>
<dbReference type="GO" id="GO:0004694">
    <property type="term" value="F:eukaryotic translation initiation factor 2alpha kinase activity"/>
    <property type="evidence" value="ECO:0000318"/>
    <property type="project" value="GO_Central"/>
</dbReference>
<dbReference type="GO" id="GO:0106310">
    <property type="term" value="F:protein serine kinase activity"/>
    <property type="evidence" value="ECO:0007669"/>
    <property type="project" value="RHEA"/>
</dbReference>
<dbReference type="GO" id="GO:0034198">
    <property type="term" value="P:cellular response to amino acid starvation"/>
    <property type="evidence" value="ECO:0000318"/>
    <property type="project" value="GO_Central"/>
</dbReference>
<dbReference type="GO" id="GO:0000077">
    <property type="term" value="P:DNA damage checkpoint signaling"/>
    <property type="evidence" value="ECO:0007669"/>
    <property type="project" value="InterPro"/>
</dbReference>
<dbReference type="GO" id="GO:0032057">
    <property type="term" value="P:negative regulation of translational initiation in response to stress"/>
    <property type="evidence" value="ECO:0000318"/>
    <property type="project" value="GO_Central"/>
</dbReference>
<dbReference type="CDD" id="cd23823">
    <property type="entry name" value="RWD_GCN2"/>
    <property type="match status" value="1"/>
</dbReference>
<dbReference type="CDD" id="cd14046">
    <property type="entry name" value="STKc_EIF2AK4_GCN2_rpt2"/>
    <property type="match status" value="1"/>
</dbReference>
<dbReference type="FunFam" id="3.30.200.20:FF:000379">
    <property type="entry name" value="eIF-2-alpha kinase GCN2"/>
    <property type="match status" value="1"/>
</dbReference>
<dbReference type="FunFam" id="3.10.110.10:FF:000197">
    <property type="entry name" value="Probable serine/threonine-protein kinase ifkC"/>
    <property type="match status" value="1"/>
</dbReference>
<dbReference type="Gene3D" id="3.40.50.800">
    <property type="entry name" value="Anticodon-binding domain"/>
    <property type="match status" value="1"/>
</dbReference>
<dbReference type="Gene3D" id="3.30.930.10">
    <property type="entry name" value="Bira Bifunctional Protein, Domain 2"/>
    <property type="match status" value="1"/>
</dbReference>
<dbReference type="Gene3D" id="3.30.200.20">
    <property type="entry name" value="Phosphorylase Kinase, domain 1"/>
    <property type="match status" value="1"/>
</dbReference>
<dbReference type="Gene3D" id="1.10.510.10">
    <property type="entry name" value="Transferase(Phosphotransferase) domain 1"/>
    <property type="match status" value="1"/>
</dbReference>
<dbReference type="Gene3D" id="3.10.110.10">
    <property type="entry name" value="Ubiquitin Conjugating Enzyme"/>
    <property type="match status" value="1"/>
</dbReference>
<dbReference type="InterPro" id="IPR045864">
    <property type="entry name" value="aa-tRNA-synth_II/BPL/LPL"/>
</dbReference>
<dbReference type="InterPro" id="IPR036621">
    <property type="entry name" value="Anticodon-bd_dom_sf"/>
</dbReference>
<dbReference type="InterPro" id="IPR050339">
    <property type="entry name" value="CC_SR_Kinase"/>
</dbReference>
<dbReference type="InterPro" id="IPR016255">
    <property type="entry name" value="Gcn2"/>
</dbReference>
<dbReference type="InterPro" id="IPR041715">
    <property type="entry name" value="HisRS-like_core"/>
</dbReference>
<dbReference type="InterPro" id="IPR024435">
    <property type="entry name" value="HisRS-related_dom"/>
</dbReference>
<dbReference type="InterPro" id="IPR011009">
    <property type="entry name" value="Kinase-like_dom_sf"/>
</dbReference>
<dbReference type="InterPro" id="IPR000719">
    <property type="entry name" value="Prot_kinase_dom"/>
</dbReference>
<dbReference type="InterPro" id="IPR017441">
    <property type="entry name" value="Protein_kinase_ATP_BS"/>
</dbReference>
<dbReference type="InterPro" id="IPR006575">
    <property type="entry name" value="RWD_dom"/>
</dbReference>
<dbReference type="InterPro" id="IPR008271">
    <property type="entry name" value="Ser/Thr_kinase_AS"/>
</dbReference>
<dbReference type="InterPro" id="IPR016135">
    <property type="entry name" value="UBQ-conjugating_enzyme/RWD"/>
</dbReference>
<dbReference type="PANTHER" id="PTHR11042:SF136">
    <property type="entry name" value="EIF-2-ALPHA KINASE GCN2"/>
    <property type="match status" value="1"/>
</dbReference>
<dbReference type="PANTHER" id="PTHR11042">
    <property type="entry name" value="EUKARYOTIC TRANSLATION INITIATION FACTOR 2-ALPHA KINASE EIF2-ALPHA KINASE -RELATED"/>
    <property type="match status" value="1"/>
</dbReference>
<dbReference type="Pfam" id="PF12745">
    <property type="entry name" value="HGTP_anticodon2"/>
    <property type="match status" value="1"/>
</dbReference>
<dbReference type="Pfam" id="PF00069">
    <property type="entry name" value="Pkinase"/>
    <property type="match status" value="3"/>
</dbReference>
<dbReference type="Pfam" id="PF05773">
    <property type="entry name" value="RWD"/>
    <property type="match status" value="1"/>
</dbReference>
<dbReference type="Pfam" id="PF13393">
    <property type="entry name" value="tRNA-synt_His"/>
    <property type="match status" value="1"/>
</dbReference>
<dbReference type="PIRSF" id="PIRSF000660">
    <property type="entry name" value="Ser/Thr_PK_GCN2"/>
    <property type="match status" value="1"/>
</dbReference>
<dbReference type="SMART" id="SM00591">
    <property type="entry name" value="RWD"/>
    <property type="match status" value="1"/>
</dbReference>
<dbReference type="SMART" id="SM00220">
    <property type="entry name" value="S_TKc"/>
    <property type="match status" value="1"/>
</dbReference>
<dbReference type="SUPFAM" id="SSF52954">
    <property type="entry name" value="Class II aaRS ABD-related"/>
    <property type="match status" value="1"/>
</dbReference>
<dbReference type="SUPFAM" id="SSF55681">
    <property type="entry name" value="Class II aaRS and biotin synthetases"/>
    <property type="match status" value="1"/>
</dbReference>
<dbReference type="SUPFAM" id="SSF56112">
    <property type="entry name" value="Protein kinase-like (PK-like)"/>
    <property type="match status" value="1"/>
</dbReference>
<dbReference type="SUPFAM" id="SSF54495">
    <property type="entry name" value="UBC-like"/>
    <property type="match status" value="1"/>
</dbReference>
<dbReference type="PROSITE" id="PS00107">
    <property type="entry name" value="PROTEIN_KINASE_ATP"/>
    <property type="match status" value="1"/>
</dbReference>
<dbReference type="PROSITE" id="PS50011">
    <property type="entry name" value="PROTEIN_KINASE_DOM"/>
    <property type="match status" value="1"/>
</dbReference>
<dbReference type="PROSITE" id="PS00108">
    <property type="entry name" value="PROTEIN_KINASE_ST"/>
    <property type="match status" value="1"/>
</dbReference>
<dbReference type="PROSITE" id="PS50908">
    <property type="entry name" value="RWD"/>
    <property type="match status" value="1"/>
</dbReference>
<feature type="chain" id="PRO_0000362013" description="Probable serine/threonine-protein kinase ifkC">
    <location>
        <begin position="1"/>
        <end position="1700"/>
    </location>
</feature>
<feature type="domain" description="RWD" evidence="2">
    <location>
        <begin position="74"/>
        <end position="197"/>
    </location>
</feature>
<feature type="domain" description="Protein kinase" evidence="1">
    <location>
        <begin position="494"/>
        <end position="1027"/>
    </location>
</feature>
<feature type="region of interest" description="Disordered" evidence="4">
    <location>
        <begin position="1"/>
        <end position="25"/>
    </location>
</feature>
<feature type="region of interest" description="Disordered" evidence="4">
    <location>
        <begin position="454"/>
        <end position="488"/>
    </location>
</feature>
<feature type="region of interest" description="Disordered" evidence="4">
    <location>
        <begin position="568"/>
        <end position="639"/>
    </location>
</feature>
<feature type="region of interest" description="Disordered" evidence="4">
    <location>
        <begin position="689"/>
        <end position="760"/>
    </location>
</feature>
<feature type="region of interest" description="Disordered" evidence="4">
    <location>
        <begin position="850"/>
        <end position="901"/>
    </location>
</feature>
<feature type="region of interest" description="Disordered" evidence="4">
    <location>
        <begin position="1134"/>
        <end position="1160"/>
    </location>
</feature>
<feature type="region of interest" description="Disordered" evidence="4">
    <location>
        <begin position="1216"/>
        <end position="1253"/>
    </location>
</feature>
<feature type="region of interest" description="Disordered" evidence="4">
    <location>
        <begin position="1507"/>
        <end position="1531"/>
    </location>
</feature>
<feature type="compositionally biased region" description="Pro residues" evidence="4">
    <location>
        <begin position="14"/>
        <end position="23"/>
    </location>
</feature>
<feature type="compositionally biased region" description="Polar residues" evidence="4">
    <location>
        <begin position="454"/>
        <end position="463"/>
    </location>
</feature>
<feature type="compositionally biased region" description="Gly residues" evidence="4">
    <location>
        <begin position="466"/>
        <end position="477"/>
    </location>
</feature>
<feature type="compositionally biased region" description="Polar residues" evidence="4">
    <location>
        <begin position="479"/>
        <end position="488"/>
    </location>
</feature>
<feature type="compositionally biased region" description="Acidic residues" evidence="4">
    <location>
        <begin position="572"/>
        <end position="639"/>
    </location>
</feature>
<feature type="compositionally biased region" description="Low complexity" evidence="4">
    <location>
        <begin position="697"/>
        <end position="735"/>
    </location>
</feature>
<feature type="compositionally biased region" description="Basic residues" evidence="4">
    <location>
        <begin position="736"/>
        <end position="752"/>
    </location>
</feature>
<feature type="compositionally biased region" description="Low complexity" evidence="4">
    <location>
        <begin position="850"/>
        <end position="875"/>
    </location>
</feature>
<feature type="compositionally biased region" description="Low complexity" evidence="4">
    <location>
        <begin position="1135"/>
        <end position="1158"/>
    </location>
</feature>
<feature type="compositionally biased region" description="Low complexity" evidence="4">
    <location>
        <begin position="1230"/>
        <end position="1240"/>
    </location>
</feature>
<feature type="compositionally biased region" description="Low complexity" evidence="4">
    <location>
        <begin position="1509"/>
        <end position="1531"/>
    </location>
</feature>
<feature type="active site" description="Proton acceptor" evidence="1 3">
    <location>
        <position position="822"/>
    </location>
</feature>
<feature type="binding site" evidence="1">
    <location>
        <begin position="500"/>
        <end position="508"/>
    </location>
    <ligand>
        <name>ATP</name>
        <dbReference type="ChEBI" id="CHEBI:30616"/>
    </ligand>
</feature>
<feature type="binding site" evidence="1">
    <location>
        <position position="523"/>
    </location>
    <ligand>
        <name>ATP</name>
        <dbReference type="ChEBI" id="CHEBI:30616"/>
    </ligand>
</feature>